<evidence type="ECO:0000305" key="1"/>
<comment type="function">
    <text>Could be involved in the regulation of exopolysaccharide synthesis.</text>
</comment>
<comment type="similarity">
    <text evidence="1">Belongs to the ros/MucR family.</text>
</comment>
<feature type="chain" id="PRO_0000168171" description="Transcriptional regulatory protein MucR homolog">
    <location>
        <begin position="1"/>
        <end position="143"/>
    </location>
</feature>
<feature type="zinc finger region" description="C2H3-type">
    <location>
        <begin position="79"/>
        <end position="97"/>
    </location>
</feature>
<geneLocation type="plasmid">
    <name>sym pNGR234a</name>
</geneLocation>
<name>MUCR_SINFN</name>
<keyword id="KW-0010">Activator</keyword>
<keyword id="KW-0238">DNA-binding</keyword>
<keyword id="KW-0479">Metal-binding</keyword>
<keyword id="KW-0614">Plasmid</keyword>
<keyword id="KW-1185">Reference proteome</keyword>
<keyword id="KW-0678">Repressor</keyword>
<keyword id="KW-0804">Transcription</keyword>
<keyword id="KW-0805">Transcription regulation</keyword>
<keyword id="KW-0862">Zinc</keyword>
<keyword id="KW-0863">Zinc-finger</keyword>
<protein>
    <recommendedName>
        <fullName>Transcriptional regulatory protein MucR homolog</fullName>
    </recommendedName>
</protein>
<organism>
    <name type="scientific">Sinorhizobium fredii (strain NBRC 101917 / NGR234)</name>
    <dbReference type="NCBI Taxonomy" id="394"/>
    <lineage>
        <taxon>Bacteria</taxon>
        <taxon>Pseudomonadati</taxon>
        <taxon>Pseudomonadota</taxon>
        <taxon>Alphaproteobacteria</taxon>
        <taxon>Hyphomicrobiales</taxon>
        <taxon>Rhizobiaceae</taxon>
        <taxon>Sinorhizobium/Ensifer group</taxon>
        <taxon>Sinorhizobium</taxon>
    </lineage>
</organism>
<proteinExistence type="inferred from homology"/>
<accession>P55363</accession>
<sequence>MTETTLGASNELLAELTAEIVAAYVSTHVVPGAELPTLIADVHSALNNATAPAPVIAPIEKPKPAVSIRKSVQDDQITCLECGGAFKSLKRHLMTHHNLSPEDYREKWDLPADYPMVAPAYAEARSRLAKEIGLGERRKRRGK</sequence>
<dbReference type="EMBL" id="U00090">
    <property type="protein sequence ID" value="AAB91613.1"/>
    <property type="molecule type" value="Genomic_DNA"/>
</dbReference>
<dbReference type="RefSeq" id="NP_443775.1">
    <property type="nucleotide sequence ID" value="NC_000914.2"/>
</dbReference>
<dbReference type="RefSeq" id="WP_010875074.1">
    <property type="nucleotide sequence ID" value="NC_000914.2"/>
</dbReference>
<dbReference type="SMR" id="P55363"/>
<dbReference type="STRING" id="394.NGR_c07580"/>
<dbReference type="KEGG" id="rhi:NGR_a00320"/>
<dbReference type="PATRIC" id="fig|394.7.peg.31"/>
<dbReference type="eggNOG" id="COG4957">
    <property type="taxonomic scope" value="Bacteria"/>
</dbReference>
<dbReference type="HOGENOM" id="CLU_106247_2_1_5"/>
<dbReference type="OrthoDB" id="9809693at2"/>
<dbReference type="Proteomes" id="UP000001054">
    <property type="component" value="Plasmid pNGR234a"/>
</dbReference>
<dbReference type="GO" id="GO:0003677">
    <property type="term" value="F:DNA binding"/>
    <property type="evidence" value="ECO:0007669"/>
    <property type="project" value="UniProtKB-KW"/>
</dbReference>
<dbReference type="GO" id="GO:0008270">
    <property type="term" value="F:zinc ion binding"/>
    <property type="evidence" value="ECO:0007669"/>
    <property type="project" value="UniProtKB-KW"/>
</dbReference>
<dbReference type="GO" id="GO:0006355">
    <property type="term" value="P:regulation of DNA-templated transcription"/>
    <property type="evidence" value="ECO:0007669"/>
    <property type="project" value="InterPro"/>
</dbReference>
<dbReference type="Gene3D" id="1.10.10.1550">
    <property type="entry name" value="ROS/MUCR transcriptional regulator protein"/>
    <property type="match status" value="1"/>
</dbReference>
<dbReference type="InterPro" id="IPR041920">
    <property type="entry name" value="ROS/MUCR_sf"/>
</dbReference>
<dbReference type="InterPro" id="IPR008807">
    <property type="entry name" value="ROS_MUCR"/>
</dbReference>
<dbReference type="Pfam" id="PF05443">
    <property type="entry name" value="ROS_MUCR"/>
    <property type="match status" value="1"/>
</dbReference>
<reference key="1">
    <citation type="journal article" date="1997" name="Nature">
        <title>Molecular basis of symbiosis between Rhizobium and legumes.</title>
        <authorList>
            <person name="Freiberg C.A."/>
            <person name="Fellay R."/>
            <person name="Bairoch A."/>
            <person name="Broughton W.J."/>
            <person name="Rosenthal A."/>
            <person name="Perret X."/>
        </authorList>
    </citation>
    <scope>NUCLEOTIDE SEQUENCE [LARGE SCALE GENOMIC DNA]</scope>
    <source>
        <strain>NBRC 101917 / NGR234</strain>
    </source>
</reference>
<reference key="2">
    <citation type="journal article" date="2009" name="Appl. Environ. Microbiol.">
        <title>Rhizobium sp. strain NGR234 possesses a remarkable number of secretion systems.</title>
        <authorList>
            <person name="Schmeisser C."/>
            <person name="Liesegang H."/>
            <person name="Krysciak D."/>
            <person name="Bakkou N."/>
            <person name="Le Quere A."/>
            <person name="Wollherr A."/>
            <person name="Heinemeyer I."/>
            <person name="Morgenstern B."/>
            <person name="Pommerening-Roeser A."/>
            <person name="Flores M."/>
            <person name="Palacios R."/>
            <person name="Brenner S."/>
            <person name="Gottschalk G."/>
            <person name="Schmitz R.A."/>
            <person name="Broughton W.J."/>
            <person name="Perret X."/>
            <person name="Strittmatter A.W."/>
            <person name="Streit W.R."/>
        </authorList>
    </citation>
    <scope>NUCLEOTIDE SEQUENCE [LARGE SCALE GENOMIC DNA]</scope>
    <source>
        <strain>NBRC 101917 / NGR234</strain>
    </source>
</reference>
<gene>
    <name type="primary">mucR</name>
    <name type="ordered locus">NGR_a00320</name>
    <name type="ORF">y4aP</name>
</gene>